<reference key="1">
    <citation type="submission" date="1996-08" db="EMBL/GenBank/DDBJ databases">
        <title>The nucleotide sequence of a 9.1 kb DNA fragment of Schizosaccharomyces pombe chromosome reveals the presence of pad1+/sks1+ gene and three previously unknown open reading frames.</title>
        <authorList>
            <person name="Nagao K."/>
            <person name="Arioka M."/>
            <person name="Kadokura H."/>
            <person name="Yoda K."/>
            <person name="Yamasaki M."/>
        </authorList>
    </citation>
    <scope>NUCLEOTIDE SEQUENCE [GENOMIC DNA]</scope>
</reference>
<reference key="2">
    <citation type="journal article" date="2002" name="Nature">
        <title>The genome sequence of Schizosaccharomyces pombe.</title>
        <authorList>
            <person name="Wood V."/>
            <person name="Gwilliam R."/>
            <person name="Rajandream M.A."/>
            <person name="Lyne M.H."/>
            <person name="Lyne R."/>
            <person name="Stewart A."/>
            <person name="Sgouros J.G."/>
            <person name="Peat N."/>
            <person name="Hayles J."/>
            <person name="Baker S.G."/>
            <person name="Basham D."/>
            <person name="Bowman S."/>
            <person name="Brooks K."/>
            <person name="Brown D."/>
            <person name="Brown S."/>
            <person name="Chillingworth T."/>
            <person name="Churcher C.M."/>
            <person name="Collins M."/>
            <person name="Connor R."/>
            <person name="Cronin A."/>
            <person name="Davis P."/>
            <person name="Feltwell T."/>
            <person name="Fraser A."/>
            <person name="Gentles S."/>
            <person name="Goble A."/>
            <person name="Hamlin N."/>
            <person name="Harris D.E."/>
            <person name="Hidalgo J."/>
            <person name="Hodgson G."/>
            <person name="Holroyd S."/>
            <person name="Hornsby T."/>
            <person name="Howarth S."/>
            <person name="Huckle E.J."/>
            <person name="Hunt S."/>
            <person name="Jagels K."/>
            <person name="James K.D."/>
            <person name="Jones L."/>
            <person name="Jones M."/>
            <person name="Leather S."/>
            <person name="McDonald S."/>
            <person name="McLean J."/>
            <person name="Mooney P."/>
            <person name="Moule S."/>
            <person name="Mungall K.L."/>
            <person name="Murphy L.D."/>
            <person name="Niblett D."/>
            <person name="Odell C."/>
            <person name="Oliver K."/>
            <person name="O'Neil S."/>
            <person name="Pearson D."/>
            <person name="Quail M.A."/>
            <person name="Rabbinowitsch E."/>
            <person name="Rutherford K.M."/>
            <person name="Rutter S."/>
            <person name="Saunders D."/>
            <person name="Seeger K."/>
            <person name="Sharp S."/>
            <person name="Skelton J."/>
            <person name="Simmonds M.N."/>
            <person name="Squares R."/>
            <person name="Squares S."/>
            <person name="Stevens K."/>
            <person name="Taylor K."/>
            <person name="Taylor R.G."/>
            <person name="Tivey A."/>
            <person name="Walsh S.V."/>
            <person name="Warren T."/>
            <person name="Whitehead S."/>
            <person name="Woodward J.R."/>
            <person name="Volckaert G."/>
            <person name="Aert R."/>
            <person name="Robben J."/>
            <person name="Grymonprez B."/>
            <person name="Weltjens I."/>
            <person name="Vanstreels E."/>
            <person name="Rieger M."/>
            <person name="Schaefer M."/>
            <person name="Mueller-Auer S."/>
            <person name="Gabel C."/>
            <person name="Fuchs M."/>
            <person name="Duesterhoeft A."/>
            <person name="Fritzc C."/>
            <person name="Holzer E."/>
            <person name="Moestl D."/>
            <person name="Hilbert H."/>
            <person name="Borzym K."/>
            <person name="Langer I."/>
            <person name="Beck A."/>
            <person name="Lehrach H."/>
            <person name="Reinhardt R."/>
            <person name="Pohl T.M."/>
            <person name="Eger P."/>
            <person name="Zimmermann W."/>
            <person name="Wedler H."/>
            <person name="Wambutt R."/>
            <person name="Purnelle B."/>
            <person name="Goffeau A."/>
            <person name="Cadieu E."/>
            <person name="Dreano S."/>
            <person name="Gloux S."/>
            <person name="Lelaure V."/>
            <person name="Mottier S."/>
            <person name="Galibert F."/>
            <person name="Aves S.J."/>
            <person name="Xiang Z."/>
            <person name="Hunt C."/>
            <person name="Moore K."/>
            <person name="Hurst S.M."/>
            <person name="Lucas M."/>
            <person name="Rochet M."/>
            <person name="Gaillardin C."/>
            <person name="Tallada V.A."/>
            <person name="Garzon A."/>
            <person name="Thode G."/>
            <person name="Daga R.R."/>
            <person name="Cruzado L."/>
            <person name="Jimenez J."/>
            <person name="Sanchez M."/>
            <person name="del Rey F."/>
            <person name="Benito J."/>
            <person name="Dominguez A."/>
            <person name="Revuelta J.L."/>
            <person name="Moreno S."/>
            <person name="Armstrong J."/>
            <person name="Forsburg S.L."/>
            <person name="Cerutti L."/>
            <person name="Lowe T."/>
            <person name="McCombie W.R."/>
            <person name="Paulsen I."/>
            <person name="Potashkin J."/>
            <person name="Shpakovski G.V."/>
            <person name="Ussery D."/>
            <person name="Barrell B.G."/>
            <person name="Nurse P."/>
        </authorList>
    </citation>
    <scope>NUCLEOTIDE SEQUENCE [LARGE SCALE GENOMIC DNA]</scope>
    <source>
        <strain>972 / ATCC 24843</strain>
    </source>
</reference>
<protein>
    <recommendedName>
        <fullName>Probable aminomethyltransferase, mitochondrial</fullName>
        <ecNumber>2.1.2.10</ecNumber>
    </recommendedName>
    <alternativeName>
        <fullName>Glycine cleavage system T protein</fullName>
        <shortName>GCVT</shortName>
    </alternativeName>
</protein>
<gene>
    <name type="primary">gcv1</name>
    <name type="ORF">n313</name>
    <name type="ORF">SPAC31G5.14</name>
</gene>
<sequence length="387" mass="42408">MNRSAALSILKRQSSTAASSSLKRTPLYDLHLKEGATIVPFAGFSMPVQYKGQTISASHKWTREHSGLFDVSHMVQWFVRGENATAYLESITPSSLKELKPFHSTLSAFTNETGGIIDDTIISKQDENTYYIVTNAACSEKDEANLKKHIENWKGVELERVQGRALIAIQGPETASVVQKLIPNVDFSVLKFGQSAYVDFKGVKCLFSRSGYTGEDGFEVSIPEEVSVDFASTLLADTRVRPIGLGARDTLRLEAGMCLYGSDIDDTTSPVEGSLSWIIGKRRRKEGGFVGSSRILKELKDGPSRRRVGFIVEKVPARHGSAVEVDGVEVGQVTSGCPSPTLGKNIAMGYISTGLHQVGTPAHIKVRNKLHPAQVVRMPFVETHYYK</sequence>
<keyword id="KW-0032">Aminotransferase</keyword>
<keyword id="KW-0496">Mitochondrion</keyword>
<keyword id="KW-1185">Reference proteome</keyword>
<keyword id="KW-0808">Transferase</keyword>
<keyword id="KW-0809">Transit peptide</keyword>
<name>GCST_SCHPO</name>
<dbReference type="EC" id="2.1.2.10"/>
<dbReference type="EMBL" id="D84656">
    <property type="protein sequence ID" value="BAA12709.1"/>
    <property type="status" value="ALT_FRAME"/>
    <property type="molecule type" value="Genomic_DNA"/>
</dbReference>
<dbReference type="EMBL" id="CU329670">
    <property type="protein sequence ID" value="CAB11698.1"/>
    <property type="molecule type" value="Genomic_DNA"/>
</dbReference>
<dbReference type="PIR" id="T38631">
    <property type="entry name" value="T38631"/>
</dbReference>
<dbReference type="RefSeq" id="NP_594015.1">
    <property type="nucleotide sequence ID" value="NM_001019441.2"/>
</dbReference>
<dbReference type="SMR" id="O14110"/>
<dbReference type="BioGRID" id="279624">
    <property type="interactions" value="1"/>
</dbReference>
<dbReference type="FunCoup" id="O14110">
    <property type="interactions" value="362"/>
</dbReference>
<dbReference type="STRING" id="284812.O14110"/>
<dbReference type="iPTMnet" id="O14110"/>
<dbReference type="PaxDb" id="4896-SPAC31G5.14.1"/>
<dbReference type="EnsemblFungi" id="SPAC31G5.14.1">
    <property type="protein sequence ID" value="SPAC31G5.14.1:pep"/>
    <property type="gene ID" value="SPAC31G5.14"/>
</dbReference>
<dbReference type="GeneID" id="2543195"/>
<dbReference type="KEGG" id="spo:2543195"/>
<dbReference type="PomBase" id="SPAC31G5.14">
    <property type="gene designation" value="gcv1"/>
</dbReference>
<dbReference type="VEuPathDB" id="FungiDB:SPAC31G5.14"/>
<dbReference type="eggNOG" id="KOG2770">
    <property type="taxonomic scope" value="Eukaryota"/>
</dbReference>
<dbReference type="HOGENOM" id="CLU_007884_10_0_1"/>
<dbReference type="InParanoid" id="O14110"/>
<dbReference type="OMA" id="MPVQYPA"/>
<dbReference type="PhylomeDB" id="O14110"/>
<dbReference type="Reactome" id="R-SPO-6783984">
    <property type="pathway name" value="Glycine degradation"/>
</dbReference>
<dbReference type="PRO" id="PR:O14110"/>
<dbReference type="Proteomes" id="UP000002485">
    <property type="component" value="Chromosome I"/>
</dbReference>
<dbReference type="GO" id="GO:0005960">
    <property type="term" value="C:glycine cleavage complex"/>
    <property type="evidence" value="ECO:0000250"/>
    <property type="project" value="PomBase"/>
</dbReference>
<dbReference type="GO" id="GO:0005759">
    <property type="term" value="C:mitochondrial matrix"/>
    <property type="evidence" value="ECO:0000305"/>
    <property type="project" value="PomBase"/>
</dbReference>
<dbReference type="GO" id="GO:0005739">
    <property type="term" value="C:mitochondrion"/>
    <property type="evidence" value="ECO:0007005"/>
    <property type="project" value="PomBase"/>
</dbReference>
<dbReference type="GO" id="GO:0004047">
    <property type="term" value="F:aminomethyltransferase activity"/>
    <property type="evidence" value="ECO:0000250"/>
    <property type="project" value="PomBase"/>
</dbReference>
<dbReference type="GO" id="GO:0008483">
    <property type="term" value="F:transaminase activity"/>
    <property type="evidence" value="ECO:0000250"/>
    <property type="project" value="PomBase"/>
</dbReference>
<dbReference type="GO" id="GO:0019464">
    <property type="term" value="P:glycine decarboxylation via glycine cleavage system"/>
    <property type="evidence" value="ECO:0000250"/>
    <property type="project" value="PomBase"/>
</dbReference>
<dbReference type="FunFam" id="2.40.30.110:FF:000002">
    <property type="entry name" value="Aminomethyltransferase"/>
    <property type="match status" value="1"/>
</dbReference>
<dbReference type="FunFam" id="3.30.70.1400:FF:000001">
    <property type="entry name" value="Aminomethyltransferase"/>
    <property type="match status" value="1"/>
</dbReference>
<dbReference type="FunFam" id="4.10.1250.10:FF:000002">
    <property type="entry name" value="Aminomethyltransferase"/>
    <property type="match status" value="1"/>
</dbReference>
<dbReference type="Gene3D" id="2.40.30.110">
    <property type="entry name" value="Aminomethyltransferase beta-barrel domains"/>
    <property type="match status" value="1"/>
</dbReference>
<dbReference type="Gene3D" id="3.30.70.1400">
    <property type="entry name" value="Aminomethyltransferase beta-barrel domains"/>
    <property type="match status" value="1"/>
</dbReference>
<dbReference type="Gene3D" id="4.10.1250.10">
    <property type="entry name" value="Aminomethyltransferase fragment"/>
    <property type="match status" value="1"/>
</dbReference>
<dbReference type="Gene3D" id="3.30.1360.120">
    <property type="entry name" value="Probable tRNA modification gtpase trme, domain 1"/>
    <property type="match status" value="1"/>
</dbReference>
<dbReference type="InterPro" id="IPR006223">
    <property type="entry name" value="GCS_T"/>
</dbReference>
<dbReference type="InterPro" id="IPR013977">
    <property type="entry name" value="GCST_C"/>
</dbReference>
<dbReference type="InterPro" id="IPR006222">
    <property type="entry name" value="GCV_T_N"/>
</dbReference>
<dbReference type="InterPro" id="IPR028896">
    <property type="entry name" value="GcvT/YgfZ/DmdA"/>
</dbReference>
<dbReference type="InterPro" id="IPR029043">
    <property type="entry name" value="GcvT/YgfZ_C"/>
</dbReference>
<dbReference type="InterPro" id="IPR027266">
    <property type="entry name" value="TrmE/GcvT_dom1"/>
</dbReference>
<dbReference type="NCBIfam" id="TIGR00528">
    <property type="entry name" value="gcvT"/>
    <property type="match status" value="1"/>
</dbReference>
<dbReference type="NCBIfam" id="NF001567">
    <property type="entry name" value="PRK00389.1"/>
    <property type="match status" value="1"/>
</dbReference>
<dbReference type="PANTHER" id="PTHR43757">
    <property type="entry name" value="AMINOMETHYLTRANSFERASE"/>
    <property type="match status" value="1"/>
</dbReference>
<dbReference type="PANTHER" id="PTHR43757:SF2">
    <property type="entry name" value="AMINOMETHYLTRANSFERASE, MITOCHONDRIAL"/>
    <property type="match status" value="1"/>
</dbReference>
<dbReference type="Pfam" id="PF01571">
    <property type="entry name" value="GCV_T"/>
    <property type="match status" value="1"/>
</dbReference>
<dbReference type="Pfam" id="PF08669">
    <property type="entry name" value="GCV_T_C"/>
    <property type="match status" value="1"/>
</dbReference>
<dbReference type="PIRSF" id="PIRSF006487">
    <property type="entry name" value="GcvT"/>
    <property type="match status" value="1"/>
</dbReference>
<dbReference type="SUPFAM" id="SSF101790">
    <property type="entry name" value="Aminomethyltransferase beta-barrel domain"/>
    <property type="match status" value="1"/>
</dbReference>
<dbReference type="SUPFAM" id="SSF103025">
    <property type="entry name" value="Folate-binding domain"/>
    <property type="match status" value="1"/>
</dbReference>
<feature type="transit peptide" description="Mitochondrion" evidence="2">
    <location>
        <begin position="1"/>
        <end status="unknown"/>
    </location>
</feature>
<feature type="chain" id="PRO_0000010765" description="Probable aminomethyltransferase, mitochondrial">
    <location>
        <begin status="unknown"/>
        <end position="387"/>
    </location>
</feature>
<feature type="binding site" evidence="1">
    <location>
        <position position="219"/>
    </location>
    <ligand>
        <name>substrate</name>
    </ligand>
</feature>
<feature type="binding site" evidence="1">
    <location>
        <position position="248"/>
    </location>
    <ligand>
        <name>substrate</name>
    </ligand>
</feature>
<feature type="binding site" evidence="1">
    <location>
        <position position="385"/>
    </location>
    <ligand>
        <name>substrate</name>
    </ligand>
</feature>
<feature type="sequence conflict" description="In Ref. 1; BAA12709." evidence="3" ref="1">
    <original>E</original>
    <variation>G</variation>
    <location>
        <position position="127"/>
    </location>
</feature>
<feature type="sequence conflict" description="In Ref. 1; BAA12709." evidence="3" ref="1">
    <original>A</original>
    <variation>S</variation>
    <location>
        <position position="255"/>
    </location>
</feature>
<feature type="sequence conflict" description="In Ref. 1; BAA12709." evidence="3" ref="1">
    <original>MCLYG</original>
    <variation>NVAFME</variation>
    <location>
        <begin position="257"/>
        <end position="261"/>
    </location>
</feature>
<feature type="sequence conflict" description="In Ref. 1; BAA12709." evidence="3" ref="1">
    <original>I</original>
    <variation>T</variation>
    <location>
        <position position="264"/>
    </location>
</feature>
<organism>
    <name type="scientific">Schizosaccharomyces pombe (strain 972 / ATCC 24843)</name>
    <name type="common">Fission yeast</name>
    <dbReference type="NCBI Taxonomy" id="284812"/>
    <lineage>
        <taxon>Eukaryota</taxon>
        <taxon>Fungi</taxon>
        <taxon>Dikarya</taxon>
        <taxon>Ascomycota</taxon>
        <taxon>Taphrinomycotina</taxon>
        <taxon>Schizosaccharomycetes</taxon>
        <taxon>Schizosaccharomycetales</taxon>
        <taxon>Schizosaccharomycetaceae</taxon>
        <taxon>Schizosaccharomyces</taxon>
    </lineage>
</organism>
<accession>O14110</accession>
<accession>Q92364</accession>
<comment type="function">
    <text evidence="1">The glycine cleavage system catalyzes the degradation of glycine.</text>
</comment>
<comment type="catalytic activity">
    <reaction>
        <text>N(6)-[(R)-S(8)-aminomethyldihydrolipoyl]-L-lysyl-[protein] + (6S)-5,6,7,8-tetrahydrofolate = N(6)-[(R)-dihydrolipoyl]-L-lysyl-[protein] + (6R)-5,10-methylene-5,6,7,8-tetrahydrofolate + NH4(+)</text>
        <dbReference type="Rhea" id="RHEA:16945"/>
        <dbReference type="Rhea" id="RHEA-COMP:10475"/>
        <dbReference type="Rhea" id="RHEA-COMP:10492"/>
        <dbReference type="ChEBI" id="CHEBI:15636"/>
        <dbReference type="ChEBI" id="CHEBI:28938"/>
        <dbReference type="ChEBI" id="CHEBI:57453"/>
        <dbReference type="ChEBI" id="CHEBI:83100"/>
        <dbReference type="ChEBI" id="CHEBI:83143"/>
        <dbReference type="EC" id="2.1.2.10"/>
    </reaction>
</comment>
<comment type="subunit">
    <text evidence="1">The glycine cleavage system is composed of four proteins: P, T, L and H.</text>
</comment>
<comment type="subcellular location">
    <subcellularLocation>
        <location evidence="1">Mitochondrion</location>
    </subcellularLocation>
</comment>
<comment type="similarity">
    <text evidence="3">Belongs to the GcvT family.</text>
</comment>
<comment type="sequence caution" evidence="3">
    <conflict type="frameshift">
        <sequence resource="EMBL-CDS" id="BAA12709"/>
    </conflict>
</comment>
<evidence type="ECO:0000250" key="1"/>
<evidence type="ECO:0000255" key="2"/>
<evidence type="ECO:0000305" key="3"/>
<proteinExistence type="inferred from homology"/>